<reference key="1">
    <citation type="journal article" date="2005" name="Nature">
        <title>Generation and annotation of the DNA sequences of human chromosomes 2 and 4.</title>
        <authorList>
            <person name="Hillier L.W."/>
            <person name="Graves T.A."/>
            <person name="Fulton R.S."/>
            <person name="Fulton L.A."/>
            <person name="Pepin K.H."/>
            <person name="Minx P."/>
            <person name="Wagner-McPherson C."/>
            <person name="Layman D."/>
            <person name="Wylie K."/>
            <person name="Sekhon M."/>
            <person name="Becker M.C."/>
            <person name="Fewell G.A."/>
            <person name="Delehaunty K.D."/>
            <person name="Miner T.L."/>
            <person name="Nash W.E."/>
            <person name="Kremitzki C."/>
            <person name="Oddy L."/>
            <person name="Du H."/>
            <person name="Sun H."/>
            <person name="Bradshaw-Cordum H."/>
            <person name="Ali J."/>
            <person name="Carter J."/>
            <person name="Cordes M."/>
            <person name="Harris A."/>
            <person name="Isak A."/>
            <person name="van Brunt A."/>
            <person name="Nguyen C."/>
            <person name="Du F."/>
            <person name="Courtney L."/>
            <person name="Kalicki J."/>
            <person name="Ozersky P."/>
            <person name="Abbott S."/>
            <person name="Armstrong J."/>
            <person name="Belter E.A."/>
            <person name="Caruso L."/>
            <person name="Cedroni M."/>
            <person name="Cotton M."/>
            <person name="Davidson T."/>
            <person name="Desai A."/>
            <person name="Elliott G."/>
            <person name="Erb T."/>
            <person name="Fronick C."/>
            <person name="Gaige T."/>
            <person name="Haakenson W."/>
            <person name="Haglund K."/>
            <person name="Holmes A."/>
            <person name="Harkins R."/>
            <person name="Kim K."/>
            <person name="Kruchowski S.S."/>
            <person name="Strong C.M."/>
            <person name="Grewal N."/>
            <person name="Goyea E."/>
            <person name="Hou S."/>
            <person name="Levy A."/>
            <person name="Martinka S."/>
            <person name="Mead K."/>
            <person name="McLellan M.D."/>
            <person name="Meyer R."/>
            <person name="Randall-Maher J."/>
            <person name="Tomlinson C."/>
            <person name="Dauphin-Kohlberg S."/>
            <person name="Kozlowicz-Reilly A."/>
            <person name="Shah N."/>
            <person name="Swearengen-Shahid S."/>
            <person name="Snider J."/>
            <person name="Strong J.T."/>
            <person name="Thompson J."/>
            <person name="Yoakum M."/>
            <person name="Leonard S."/>
            <person name="Pearman C."/>
            <person name="Trani L."/>
            <person name="Radionenko M."/>
            <person name="Waligorski J.E."/>
            <person name="Wang C."/>
            <person name="Rock S.M."/>
            <person name="Tin-Wollam A.-M."/>
            <person name="Maupin R."/>
            <person name="Latreille P."/>
            <person name="Wendl M.C."/>
            <person name="Yang S.-P."/>
            <person name="Pohl C."/>
            <person name="Wallis J.W."/>
            <person name="Spieth J."/>
            <person name="Bieri T.A."/>
            <person name="Berkowicz N."/>
            <person name="Nelson J.O."/>
            <person name="Osborne J."/>
            <person name="Ding L."/>
            <person name="Meyer R."/>
            <person name="Sabo A."/>
            <person name="Shotland Y."/>
            <person name="Sinha P."/>
            <person name="Wohldmann P.E."/>
            <person name="Cook L.L."/>
            <person name="Hickenbotham M.T."/>
            <person name="Eldred J."/>
            <person name="Williams D."/>
            <person name="Jones T.A."/>
            <person name="She X."/>
            <person name="Ciccarelli F.D."/>
            <person name="Izaurralde E."/>
            <person name="Taylor J."/>
            <person name="Schmutz J."/>
            <person name="Myers R.M."/>
            <person name="Cox D.R."/>
            <person name="Huang X."/>
            <person name="McPherson J.D."/>
            <person name="Mardis E.R."/>
            <person name="Clifton S.W."/>
            <person name="Warren W.C."/>
            <person name="Chinwalla A.T."/>
            <person name="Eddy S.R."/>
            <person name="Marra M.A."/>
            <person name="Ovcharenko I."/>
            <person name="Furey T.S."/>
            <person name="Miller W."/>
            <person name="Eichler E.E."/>
            <person name="Bork P."/>
            <person name="Suyama M."/>
            <person name="Torrents D."/>
            <person name="Waterston R.H."/>
            <person name="Wilson R.K."/>
        </authorList>
    </citation>
    <scope>NUCLEOTIDE SEQUENCE [LARGE SCALE GENOMIC DNA] (IMGT ALLELE IGKV6D-21*02)</scope>
</reference>
<reference key="2">
    <citation type="journal article" date="2001" name="Exp. Clin. Immunogenet.">
        <title>Nomenclature of the human immunoglobulin kappa (IGK) genes.</title>
        <authorList>
            <person name="Lefranc M.P."/>
        </authorList>
    </citation>
    <scope>NOMEMCLATURE</scope>
</reference>
<reference key="3">
    <citation type="book" date="2001" name="The Immunoglobulin FactsBook.">
        <title>The Immunoglobulin FactsBook.</title>
        <editorList>
            <person name="Lefranc M.P."/>
            <person name="Lefranc G."/>
        </editorList>
        <authorList>
            <person name="Lefranc M.P."/>
            <person name="Lefranc G."/>
        </authorList>
    </citation>
    <scope>NOMENCLATURE</scope>
</reference>
<reference key="4">
    <citation type="journal article" date="2007" name="Annu. Rev. Genet.">
        <title>Immunoglobulin somatic hypermutation.</title>
        <authorList>
            <person name="Teng G."/>
            <person name="Papavasiliou F.N."/>
        </authorList>
    </citation>
    <scope>REVIEW ON SOMATIC HYPERMUTATION</scope>
</reference>
<reference key="5">
    <citation type="journal article" date="2010" name="J. Allergy Clin. Immunol.">
        <title>Structure and function of immunoglobulins.</title>
        <authorList>
            <person name="Schroeder H.W. Jr."/>
            <person name="Cavacini L."/>
        </authorList>
    </citation>
    <scope>REVIEW ON IMMUNOGLOBULINS</scope>
</reference>
<reference key="6">
    <citation type="journal article" date="2012" name="Nat. Rev. Immunol.">
        <title>Molecular programming of B cell memory.</title>
        <authorList>
            <person name="McHeyzer-Williams M."/>
            <person name="Okitsu S."/>
            <person name="Wang N."/>
            <person name="McHeyzer-Williams L."/>
        </authorList>
    </citation>
    <scope>REVIEW ON FUNCTION</scope>
</reference>
<reference key="7">
    <citation type="journal article" date="2014" name="Front. Immunol.">
        <title>Immunoglobulin and T Cell Receptor Genes: IMGT((R)) and the Birth and Rise of Immunoinformatics.</title>
        <authorList>
            <person name="Lefranc M.P."/>
        </authorList>
    </citation>
    <scope>NOMENCLATURE</scope>
</reference>
<feature type="signal peptide" evidence="2">
    <location>
        <begin position="1"/>
        <end position="19"/>
    </location>
</feature>
<feature type="chain" id="PRO_5001967112" description="Immunoglobulin kappa variable 6D-21" evidence="2">
    <location>
        <begin position="20"/>
        <end position="114"/>
    </location>
</feature>
<feature type="domain" description="Ig-like" evidence="3">
    <location>
        <begin position="20"/>
        <end position="114" status="greater than"/>
    </location>
</feature>
<feature type="region of interest" description="Framework-1" evidence="1">
    <location>
        <begin position="20"/>
        <end position="42"/>
    </location>
</feature>
<feature type="region of interest" description="Complementarity-determining-1" evidence="1">
    <location>
        <begin position="43"/>
        <end position="53"/>
    </location>
</feature>
<feature type="region of interest" description="Framework-2" evidence="1">
    <location>
        <begin position="54"/>
        <end position="68"/>
    </location>
</feature>
<feature type="region of interest" description="Complementarity-determining-2" evidence="1">
    <location>
        <begin position="69"/>
        <end position="75"/>
    </location>
</feature>
<feature type="region of interest" description="Framework-3" evidence="1">
    <location>
        <begin position="76"/>
        <end position="107"/>
    </location>
</feature>
<feature type="region of interest" description="Complementarity-determining-3" evidence="1">
    <location>
        <begin position="108"/>
        <end position="114" status="greater than"/>
    </location>
</feature>
<feature type="disulfide bond" evidence="3">
    <location>
        <begin position="42"/>
        <end position="107"/>
    </location>
</feature>
<feature type="non-terminal residue">
    <location>
        <position position="114"/>
    </location>
</feature>
<evidence type="ECO:0000250" key="1">
    <source>
        <dbReference type="UniProtKB" id="P01602"/>
    </source>
</evidence>
<evidence type="ECO:0000255" key="2"/>
<evidence type="ECO:0000255" key="3">
    <source>
        <dbReference type="PROSITE-ProRule" id="PRU00114"/>
    </source>
</evidence>
<evidence type="ECO:0000303" key="4">
    <source>
    </source>
</evidence>
<evidence type="ECO:0000303" key="5">
    <source>
    </source>
</evidence>
<evidence type="ECO:0000303" key="6">
    <source>
    </source>
</evidence>
<evidence type="ECO:0000303" key="7">
    <source>
    </source>
</evidence>
<evidence type="ECO:0000303" key="8">
    <source>
    </source>
</evidence>
<evidence type="ECO:0000303" key="9">
    <source ref="3"/>
</evidence>
<evidence type="ECO:0000305" key="10"/>
<comment type="function">
    <text evidence="5 6 7 8">V region of the variable domain of immunoglobulin light chains that participates in the antigen recognition (PubMed:24600447). Immunoglobulins, also known as antibodies, are membrane-bound or secreted glycoproteins produced by B lymphocytes. In the recognition phase of humoral immunity, the membrane-bound immunoglobulins serve as receptors which, upon binding of a specific antigen, trigger the clonal expansion and differentiation of B lymphocytes into immunoglobulins-secreting plasma cells. Secreted immunoglobulins mediate the effector phase of humoral immunity, which results in the elimination of bound antigens (PubMed:20176268, PubMed:22158414). The antigen binding site is formed by the variable domain of one heavy chain, together with that of its associated light chain. Thus, each immunoglobulin has two antigen binding sites with remarkable affinity for a particular antigen. The variable domains are assembled by a process called V-(D)-J rearrangement and can then be subjected to somatic hypermutations which, after exposure to antigen and selection, allow affinity maturation for a particular antigen (PubMed:17576170, PubMed:20176268).</text>
</comment>
<comment type="subunit">
    <text evidence="6">Immunoglobulins are composed of two identical heavy chains and two identical light chains; disulfide-linked.</text>
</comment>
<comment type="subcellular location">
    <subcellularLocation>
        <location evidence="6 7">Secreted</location>
    </subcellularLocation>
    <subcellularLocation>
        <location evidence="6 7">Cell membrane</location>
    </subcellularLocation>
</comment>
<comment type="polymorphism">
    <text>There are several alleles. The sequence shown is that of IMGT allele IGKV6D-21*02.</text>
</comment>
<comment type="caution">
    <text evidence="10">For an example of a full-length immunoglobulin kappa light chain see AC P0DOX7.</text>
</comment>
<organism>
    <name type="scientific">Homo sapiens</name>
    <name type="common">Human</name>
    <dbReference type="NCBI Taxonomy" id="9606"/>
    <lineage>
        <taxon>Eukaryota</taxon>
        <taxon>Metazoa</taxon>
        <taxon>Chordata</taxon>
        <taxon>Craniata</taxon>
        <taxon>Vertebrata</taxon>
        <taxon>Euteleostomi</taxon>
        <taxon>Mammalia</taxon>
        <taxon>Eutheria</taxon>
        <taxon>Euarchontoglires</taxon>
        <taxon>Primates</taxon>
        <taxon>Haplorrhini</taxon>
        <taxon>Catarrhini</taxon>
        <taxon>Hominidae</taxon>
        <taxon>Homo</taxon>
    </lineage>
</organism>
<name>KVD21_HUMAN</name>
<sequence length="114" mass="12340">MSPSQLIGFLLLWVPASRGEIVLTQSPDFQSVTPKEKVTITCRASQSIGSSLHWYQQKPDQSPKLLIKYASQSISGVPSRFSGSGSGTDFTLTINSLEAEDAAAYYCHQSSSLP</sequence>
<proteinExistence type="inferred from homology"/>
<gene>
    <name evidence="4 9" type="primary">IGKV6D-21</name>
</gene>
<accession>A0A0A0MT36</accession>
<dbReference type="EMBL" id="AC245506">
    <property type="status" value="NOT_ANNOTATED_CDS"/>
    <property type="molecule type" value="Genomic_DNA"/>
</dbReference>
<dbReference type="EMDB" id="EMD-30331"/>
<dbReference type="EMDB" id="EMD-30486"/>
<dbReference type="SMR" id="A0A0A0MT36"/>
<dbReference type="FunCoup" id="A0A0A0MT36">
    <property type="interactions" value="180"/>
</dbReference>
<dbReference type="IMGT_GENE-DB" id="IGKV6D-21"/>
<dbReference type="BioMuta" id="IGKV6D-21"/>
<dbReference type="jPOST" id="A0A0A0MT36"/>
<dbReference type="MassIVE" id="A0A0A0MT36"/>
<dbReference type="Ensembl" id="ENST00000436451.2">
    <property type="protein sequence ID" value="ENSP00000413304.2"/>
    <property type="gene ID" value="ENSG00000225523.2"/>
</dbReference>
<dbReference type="UCSC" id="uc061lrt.1">
    <property type="organism name" value="human"/>
</dbReference>
<dbReference type="AGR" id="HGNC:5837"/>
<dbReference type="GeneCards" id="IGKV6D-21"/>
<dbReference type="HGNC" id="HGNC:5837">
    <property type="gene designation" value="IGKV6D-21"/>
</dbReference>
<dbReference type="HPA" id="ENSG00000225523">
    <property type="expression patterns" value="Group enriched (intestine, lymphoid tissue, urinary bladder)"/>
</dbReference>
<dbReference type="neXtProt" id="NX_A0A0A0MT36"/>
<dbReference type="OpenTargets" id="ENSG00000225523"/>
<dbReference type="VEuPathDB" id="HostDB:ENSG00000225523"/>
<dbReference type="GeneTree" id="ENSGT00940000163546"/>
<dbReference type="HOGENOM" id="CLU_077975_4_1_1"/>
<dbReference type="InParanoid" id="A0A0A0MT36"/>
<dbReference type="OMA" id="AWLNRET"/>
<dbReference type="OrthoDB" id="9519958at2759"/>
<dbReference type="PAN-GO" id="A0A0A0MT36">
    <property type="GO annotations" value="3 GO annotations based on evolutionary models"/>
</dbReference>
<dbReference type="PhylomeDB" id="A0A0A0MT36"/>
<dbReference type="SignaLink" id="A0A0A0MT36"/>
<dbReference type="Pharos" id="A0A0A0MT36">
    <property type="development level" value="Tdark"/>
</dbReference>
<dbReference type="PRO" id="PR:A0A0A0MT36"/>
<dbReference type="Proteomes" id="UP000005640">
    <property type="component" value="Chromosome 2"/>
</dbReference>
<dbReference type="RNAct" id="A0A0A0MT36">
    <property type="molecule type" value="protein"/>
</dbReference>
<dbReference type="Bgee" id="ENSG00000225523">
    <property type="expression patterns" value="Expressed in duodenum and 75 other cell types or tissues"/>
</dbReference>
<dbReference type="GO" id="GO:0005576">
    <property type="term" value="C:extracellular region"/>
    <property type="evidence" value="ECO:0007669"/>
    <property type="project" value="UniProtKB-SubCell"/>
</dbReference>
<dbReference type="GO" id="GO:0019814">
    <property type="term" value="C:immunoglobulin complex"/>
    <property type="evidence" value="ECO:0000318"/>
    <property type="project" value="GO_Central"/>
</dbReference>
<dbReference type="GO" id="GO:0005886">
    <property type="term" value="C:plasma membrane"/>
    <property type="evidence" value="ECO:0007669"/>
    <property type="project" value="UniProtKB-SubCell"/>
</dbReference>
<dbReference type="GO" id="GO:0002250">
    <property type="term" value="P:adaptive immune response"/>
    <property type="evidence" value="ECO:0007669"/>
    <property type="project" value="UniProtKB-KW"/>
</dbReference>
<dbReference type="GO" id="GO:0006955">
    <property type="term" value="P:immune response"/>
    <property type="evidence" value="ECO:0000318"/>
    <property type="project" value="GO_Central"/>
</dbReference>
<dbReference type="FunFam" id="2.60.40.10:FF:000350">
    <property type="entry name" value="Immunoglobulin kappa chain variable 18-36"/>
    <property type="match status" value="1"/>
</dbReference>
<dbReference type="Gene3D" id="2.60.40.10">
    <property type="entry name" value="Immunoglobulins"/>
    <property type="match status" value="1"/>
</dbReference>
<dbReference type="InterPro" id="IPR007110">
    <property type="entry name" value="Ig-like_dom"/>
</dbReference>
<dbReference type="InterPro" id="IPR036179">
    <property type="entry name" value="Ig-like_dom_sf"/>
</dbReference>
<dbReference type="InterPro" id="IPR013783">
    <property type="entry name" value="Ig-like_fold"/>
</dbReference>
<dbReference type="InterPro" id="IPR003599">
    <property type="entry name" value="Ig_sub"/>
</dbReference>
<dbReference type="InterPro" id="IPR013106">
    <property type="entry name" value="Ig_V-set"/>
</dbReference>
<dbReference type="InterPro" id="IPR050150">
    <property type="entry name" value="IgV_Light_Chain"/>
</dbReference>
<dbReference type="PANTHER" id="PTHR23267">
    <property type="entry name" value="IMMUNOGLOBULIN LIGHT CHAIN"/>
    <property type="match status" value="1"/>
</dbReference>
<dbReference type="Pfam" id="PF07686">
    <property type="entry name" value="V-set"/>
    <property type="match status" value="1"/>
</dbReference>
<dbReference type="SMART" id="SM00409">
    <property type="entry name" value="IG"/>
    <property type="match status" value="1"/>
</dbReference>
<dbReference type="SMART" id="SM00406">
    <property type="entry name" value="IGv"/>
    <property type="match status" value="1"/>
</dbReference>
<dbReference type="SUPFAM" id="SSF48726">
    <property type="entry name" value="Immunoglobulin"/>
    <property type="match status" value="1"/>
</dbReference>
<dbReference type="PROSITE" id="PS50835">
    <property type="entry name" value="IG_LIKE"/>
    <property type="match status" value="1"/>
</dbReference>
<keyword id="KW-1064">Adaptive immunity</keyword>
<keyword id="KW-1003">Cell membrane</keyword>
<keyword id="KW-1015">Disulfide bond</keyword>
<keyword id="KW-0391">Immunity</keyword>
<keyword id="KW-1280">Immunoglobulin</keyword>
<keyword id="KW-0393">Immunoglobulin domain</keyword>
<keyword id="KW-0472">Membrane</keyword>
<keyword id="KW-1185">Reference proteome</keyword>
<keyword id="KW-0964">Secreted</keyword>
<keyword id="KW-0732">Signal</keyword>
<protein>
    <recommendedName>
        <fullName evidence="4 9">Immunoglobulin kappa variable 6D-21</fullName>
    </recommendedName>
</protein>